<organism>
    <name type="scientific">Agaricus bisporus</name>
    <name type="common">White button mushroom</name>
    <dbReference type="NCBI Taxonomy" id="5341"/>
    <lineage>
        <taxon>Eukaryota</taxon>
        <taxon>Fungi</taxon>
        <taxon>Dikarya</taxon>
        <taxon>Basidiomycota</taxon>
        <taxon>Agaricomycotina</taxon>
        <taxon>Agaricomycetes</taxon>
        <taxon>Agaricomycetidae</taxon>
        <taxon>Agaricales</taxon>
        <taxon>Agaricineae</taxon>
        <taxon>Agaricaceae</taxon>
        <taxon>Agaricus</taxon>
    </lineage>
</organism>
<protein>
    <recommendedName>
        <fullName>Thymidylate synthase</fullName>
        <shortName>TS</shortName>
        <shortName>TSase</shortName>
        <ecNumber>2.1.1.45</ecNumber>
    </recommendedName>
</protein>
<feature type="chain" id="PRO_0000140908" description="Thymidylate synthase">
    <location>
        <begin position="1"/>
        <end position="296"/>
    </location>
</feature>
<feature type="active site" description="Nucleophile" evidence="2">
    <location>
        <position position="171"/>
    </location>
</feature>
<feature type="binding site" description="in other chain" evidence="2">
    <location>
        <position position="24"/>
    </location>
    <ligand>
        <name>dUMP</name>
        <dbReference type="ChEBI" id="CHEBI:246422"/>
        <note>ligand shared between dimeric partners</note>
    </ligand>
</feature>
<feature type="binding site" evidence="2">
    <location>
        <begin position="151"/>
        <end position="152"/>
    </location>
    <ligand>
        <name>dUMP</name>
        <dbReference type="ChEBI" id="CHEBI:246422"/>
        <note>ligand shared between dimeric partners</note>
    </ligand>
</feature>
<feature type="binding site" description="in other chain" evidence="2">
    <location>
        <begin position="197"/>
        <end position="200"/>
    </location>
    <ligand>
        <name>dUMP</name>
        <dbReference type="ChEBI" id="CHEBI:246422"/>
        <note>ligand shared between dimeric partners</note>
    </ligand>
</feature>
<feature type="binding site" evidence="2">
    <location>
        <position position="200"/>
    </location>
    <ligand>
        <name>(6R)-5,10-methylene-5,6,7,8-tetrahydrofolate</name>
        <dbReference type="ChEBI" id="CHEBI:15636"/>
    </ligand>
</feature>
<feature type="binding site" description="in other chain" evidence="2">
    <location>
        <position position="208"/>
    </location>
    <ligand>
        <name>dUMP</name>
        <dbReference type="ChEBI" id="CHEBI:246422"/>
        <note>ligand shared between dimeric partners</note>
    </ligand>
</feature>
<feature type="binding site" description="in other chain" evidence="2">
    <location>
        <begin position="238"/>
        <end position="240"/>
    </location>
    <ligand>
        <name>dUMP</name>
        <dbReference type="ChEBI" id="CHEBI:246422"/>
        <note>ligand shared between dimeric partners</note>
    </ligand>
</feature>
<comment type="catalytic activity">
    <reaction>
        <text>dUMP + (6R)-5,10-methylene-5,6,7,8-tetrahydrofolate = 7,8-dihydrofolate + dTMP</text>
        <dbReference type="Rhea" id="RHEA:12104"/>
        <dbReference type="ChEBI" id="CHEBI:15636"/>
        <dbReference type="ChEBI" id="CHEBI:57451"/>
        <dbReference type="ChEBI" id="CHEBI:63528"/>
        <dbReference type="ChEBI" id="CHEBI:246422"/>
        <dbReference type="EC" id="2.1.1.45"/>
    </reaction>
</comment>
<comment type="pathway">
    <text>Pyrimidine metabolism; dTTP biosynthesis.</text>
</comment>
<comment type="subunit">
    <text evidence="1">Homodimer.</text>
</comment>
<comment type="similarity">
    <text evidence="3">Belongs to the thymidylate synthase family.</text>
</comment>
<sequence length="296" mass="33679">MHDEDQYLHLIRRVLDTGDLRPDRTGTGTISLFAPPNLRFSLRESTVPLLTTKRTFLRGIVEELLWFTNGLTDSKILSDKGVKIWDGNGSKAFLESRGLGHRREGDLGPVYGFQWRHFGAEYEDCDADYAGKGVDQLRECIRKIKENPTDRRIILSAWNPKDIPSMALPPCHMLCQFYVHLPADTAKPELSCLMFQRSADLGLGIPFNIASYALLTHMIAHVTGTTARELIIQLGDAHVYRDHVEALEVQLQREPRPFPKLRWARDGITDIEDFEYSDFVIEGYNPHPSIAMKMSV</sequence>
<reference key="1">
    <citation type="submission" date="2000-06" db="EMBL/GenBank/DDBJ databases">
        <title>Genomic sequencing of superoxide dismutase in Agaricus bisporus.</title>
        <authorList>
            <person name="Eastwood D.C."/>
            <person name="Bains N.K."/>
            <person name="Henderson J."/>
            <person name="Burton K.S."/>
        </authorList>
    </citation>
    <scope>NUCLEOTIDE SEQUENCE [GENOMIC DNA]</scope>
    <source>
        <strain>Horst U3</strain>
    </source>
</reference>
<name>TYSY_AGABI</name>
<keyword id="KW-0489">Methyltransferase</keyword>
<keyword id="KW-0545">Nucleotide biosynthesis</keyword>
<keyword id="KW-0808">Transferase</keyword>
<dbReference type="EC" id="2.1.1.45"/>
<dbReference type="EMBL" id="AJ401221">
    <property type="protein sequence ID" value="CAB96042.1"/>
    <property type="molecule type" value="Genomic_DNA"/>
</dbReference>
<dbReference type="SMR" id="Q9P4T7"/>
<dbReference type="UniPathway" id="UPA00575"/>
<dbReference type="GO" id="GO:0005829">
    <property type="term" value="C:cytosol"/>
    <property type="evidence" value="ECO:0007669"/>
    <property type="project" value="TreeGrafter"/>
</dbReference>
<dbReference type="GO" id="GO:0005739">
    <property type="term" value="C:mitochondrion"/>
    <property type="evidence" value="ECO:0007669"/>
    <property type="project" value="TreeGrafter"/>
</dbReference>
<dbReference type="GO" id="GO:0004799">
    <property type="term" value="F:thymidylate synthase activity"/>
    <property type="evidence" value="ECO:0007669"/>
    <property type="project" value="UniProtKB-EC"/>
</dbReference>
<dbReference type="GO" id="GO:0006231">
    <property type="term" value="P:dTMP biosynthetic process"/>
    <property type="evidence" value="ECO:0007669"/>
    <property type="project" value="InterPro"/>
</dbReference>
<dbReference type="GO" id="GO:0006235">
    <property type="term" value="P:dTTP biosynthetic process"/>
    <property type="evidence" value="ECO:0007669"/>
    <property type="project" value="UniProtKB-UniPathway"/>
</dbReference>
<dbReference type="GO" id="GO:0032259">
    <property type="term" value="P:methylation"/>
    <property type="evidence" value="ECO:0007669"/>
    <property type="project" value="UniProtKB-KW"/>
</dbReference>
<dbReference type="CDD" id="cd00351">
    <property type="entry name" value="TS_Pyrimidine_HMase"/>
    <property type="match status" value="1"/>
</dbReference>
<dbReference type="FunFam" id="3.30.572.10:FF:000013">
    <property type="entry name" value="Thymidylate synthase"/>
    <property type="match status" value="1"/>
</dbReference>
<dbReference type="Gene3D" id="3.30.572.10">
    <property type="entry name" value="Thymidylate synthase/dCMP hydroxymethylase domain"/>
    <property type="match status" value="1"/>
</dbReference>
<dbReference type="HAMAP" id="MF_00008">
    <property type="entry name" value="Thymidy_synth_bact"/>
    <property type="match status" value="1"/>
</dbReference>
<dbReference type="InterPro" id="IPR045097">
    <property type="entry name" value="Thymidate_synth/dCMP_Mease"/>
</dbReference>
<dbReference type="InterPro" id="IPR023451">
    <property type="entry name" value="Thymidate_synth/dCMP_Mease_dom"/>
</dbReference>
<dbReference type="InterPro" id="IPR036926">
    <property type="entry name" value="Thymidate_synth/dCMP_Mease_sf"/>
</dbReference>
<dbReference type="InterPro" id="IPR000398">
    <property type="entry name" value="Thymidylate_synthase"/>
</dbReference>
<dbReference type="InterPro" id="IPR020940">
    <property type="entry name" value="Thymidylate_synthase_AS"/>
</dbReference>
<dbReference type="NCBIfam" id="TIGR03284">
    <property type="entry name" value="thym_sym"/>
    <property type="match status" value="1"/>
</dbReference>
<dbReference type="PANTHER" id="PTHR11548:SF2">
    <property type="entry name" value="THYMIDYLATE SYNTHASE"/>
    <property type="match status" value="1"/>
</dbReference>
<dbReference type="PANTHER" id="PTHR11548">
    <property type="entry name" value="THYMIDYLATE SYNTHASE 1"/>
    <property type="match status" value="1"/>
</dbReference>
<dbReference type="Pfam" id="PF00303">
    <property type="entry name" value="Thymidylat_synt"/>
    <property type="match status" value="1"/>
</dbReference>
<dbReference type="PRINTS" id="PR00108">
    <property type="entry name" value="THYMDSNTHASE"/>
</dbReference>
<dbReference type="SUPFAM" id="SSF55831">
    <property type="entry name" value="Thymidylate synthase/dCMP hydroxymethylase"/>
    <property type="match status" value="1"/>
</dbReference>
<dbReference type="PROSITE" id="PS00091">
    <property type="entry name" value="THYMIDYLATE_SYNTHASE"/>
    <property type="match status" value="1"/>
</dbReference>
<proteinExistence type="inferred from homology"/>
<evidence type="ECO:0000250" key="1"/>
<evidence type="ECO:0000250" key="2">
    <source>
        <dbReference type="UniProtKB" id="P0A884"/>
    </source>
</evidence>
<evidence type="ECO:0000305" key="3"/>
<accession>Q9P4T7</accession>
<gene>
    <name type="primary">tms1</name>
</gene>